<reference key="1">
    <citation type="journal article" date="2009" name="J. Bacteriol.">
        <title>Genome sequences of three Agrobacterium biovars help elucidate the evolution of multichromosome genomes in bacteria.</title>
        <authorList>
            <person name="Slater S.C."/>
            <person name="Goldman B.S."/>
            <person name="Goodner B."/>
            <person name="Setubal J.C."/>
            <person name="Farrand S.K."/>
            <person name="Nester E.W."/>
            <person name="Burr T.J."/>
            <person name="Banta L."/>
            <person name="Dickerman A.W."/>
            <person name="Paulsen I."/>
            <person name="Otten L."/>
            <person name="Suen G."/>
            <person name="Welch R."/>
            <person name="Almeida N.F."/>
            <person name="Arnold F."/>
            <person name="Burton O.T."/>
            <person name="Du Z."/>
            <person name="Ewing A."/>
            <person name="Godsy E."/>
            <person name="Heisel S."/>
            <person name="Houmiel K.L."/>
            <person name="Jhaveri J."/>
            <person name="Lu J."/>
            <person name="Miller N.M."/>
            <person name="Norton S."/>
            <person name="Chen Q."/>
            <person name="Phoolcharoen W."/>
            <person name="Ohlin V."/>
            <person name="Ondrusek D."/>
            <person name="Pride N."/>
            <person name="Stricklin S.L."/>
            <person name="Sun J."/>
            <person name="Wheeler C."/>
            <person name="Wilson L."/>
            <person name="Zhu H."/>
            <person name="Wood D.W."/>
        </authorList>
    </citation>
    <scope>NUCLEOTIDE SEQUENCE [LARGE SCALE GENOMIC DNA]</scope>
    <source>
        <strain>K84 / ATCC BAA-868</strain>
    </source>
</reference>
<feature type="chain" id="PRO_1000116669" description="Recombination protein RecR">
    <location>
        <begin position="1"/>
        <end position="201"/>
    </location>
</feature>
<feature type="domain" description="Toprim" evidence="1">
    <location>
        <begin position="83"/>
        <end position="178"/>
    </location>
</feature>
<feature type="zinc finger region" description="C4-type" evidence="1">
    <location>
        <begin position="60"/>
        <end position="75"/>
    </location>
</feature>
<gene>
    <name evidence="1" type="primary">recR</name>
    <name type="ordered locus">Arad_0179</name>
</gene>
<evidence type="ECO:0000255" key="1">
    <source>
        <dbReference type="HAMAP-Rule" id="MF_00017"/>
    </source>
</evidence>
<proteinExistence type="inferred from homology"/>
<sequence length="201" mass="21355">MAKRVTGPEIEKLIQLLAKVPGLGPRSARRAALHLIKKKDQLLGPLSHAMGEAYDKVKICSRCGNVDTVDPCTVCTDGHRDQSVIIVVEDVADLWALERAAAMNAAYHVLGGVLSPLDGVGPDDLNIRGLIQRVGEGGVREIIIAVNATVEGQTTAHYITDQLAGLEVKITRLAHGVPVGGELDYLDEGTLTAALRARTAI</sequence>
<keyword id="KW-0227">DNA damage</keyword>
<keyword id="KW-0233">DNA recombination</keyword>
<keyword id="KW-0234">DNA repair</keyword>
<keyword id="KW-0479">Metal-binding</keyword>
<keyword id="KW-0862">Zinc</keyword>
<keyword id="KW-0863">Zinc-finger</keyword>
<accession>B9JGT9</accession>
<protein>
    <recommendedName>
        <fullName evidence="1">Recombination protein RecR</fullName>
    </recommendedName>
</protein>
<dbReference type="EMBL" id="CP000628">
    <property type="protein sequence ID" value="ACM24935.1"/>
    <property type="molecule type" value="Genomic_DNA"/>
</dbReference>
<dbReference type="RefSeq" id="WP_007690290.1">
    <property type="nucleotide sequence ID" value="NC_011985.1"/>
</dbReference>
<dbReference type="SMR" id="B9JGT9"/>
<dbReference type="STRING" id="311403.Arad_0179"/>
<dbReference type="GeneID" id="86850568"/>
<dbReference type="KEGG" id="ara:Arad_0179"/>
<dbReference type="eggNOG" id="COG0353">
    <property type="taxonomic scope" value="Bacteria"/>
</dbReference>
<dbReference type="HOGENOM" id="CLU_060739_1_1_5"/>
<dbReference type="Proteomes" id="UP000001600">
    <property type="component" value="Chromosome 1"/>
</dbReference>
<dbReference type="GO" id="GO:0003677">
    <property type="term" value="F:DNA binding"/>
    <property type="evidence" value="ECO:0007669"/>
    <property type="project" value="UniProtKB-UniRule"/>
</dbReference>
<dbReference type="GO" id="GO:0008270">
    <property type="term" value="F:zinc ion binding"/>
    <property type="evidence" value="ECO:0007669"/>
    <property type="project" value="UniProtKB-KW"/>
</dbReference>
<dbReference type="GO" id="GO:0006310">
    <property type="term" value="P:DNA recombination"/>
    <property type="evidence" value="ECO:0007669"/>
    <property type="project" value="UniProtKB-UniRule"/>
</dbReference>
<dbReference type="GO" id="GO:0006281">
    <property type="term" value="P:DNA repair"/>
    <property type="evidence" value="ECO:0007669"/>
    <property type="project" value="UniProtKB-UniRule"/>
</dbReference>
<dbReference type="CDD" id="cd01025">
    <property type="entry name" value="TOPRIM_recR"/>
    <property type="match status" value="1"/>
</dbReference>
<dbReference type="Gene3D" id="3.40.1360.10">
    <property type="match status" value="1"/>
</dbReference>
<dbReference type="Gene3D" id="6.10.250.240">
    <property type="match status" value="1"/>
</dbReference>
<dbReference type="Gene3D" id="1.10.8.420">
    <property type="entry name" value="RecR Domain 1"/>
    <property type="match status" value="1"/>
</dbReference>
<dbReference type="HAMAP" id="MF_00017">
    <property type="entry name" value="RecR"/>
    <property type="match status" value="1"/>
</dbReference>
<dbReference type="InterPro" id="IPR000093">
    <property type="entry name" value="DNA_Rcmb_RecR"/>
</dbReference>
<dbReference type="InterPro" id="IPR023627">
    <property type="entry name" value="Rcmb_RecR"/>
</dbReference>
<dbReference type="InterPro" id="IPR015967">
    <property type="entry name" value="Rcmb_RecR_Znf"/>
</dbReference>
<dbReference type="InterPro" id="IPR006171">
    <property type="entry name" value="TOPRIM_dom"/>
</dbReference>
<dbReference type="InterPro" id="IPR034137">
    <property type="entry name" value="TOPRIM_RecR"/>
</dbReference>
<dbReference type="NCBIfam" id="TIGR00615">
    <property type="entry name" value="recR"/>
    <property type="match status" value="1"/>
</dbReference>
<dbReference type="PANTHER" id="PTHR30446">
    <property type="entry name" value="RECOMBINATION PROTEIN RECR"/>
    <property type="match status" value="1"/>
</dbReference>
<dbReference type="PANTHER" id="PTHR30446:SF0">
    <property type="entry name" value="RECOMBINATION PROTEIN RECR"/>
    <property type="match status" value="1"/>
</dbReference>
<dbReference type="Pfam" id="PF21175">
    <property type="entry name" value="RecR_C"/>
    <property type="match status" value="1"/>
</dbReference>
<dbReference type="Pfam" id="PF21176">
    <property type="entry name" value="RecR_HhH"/>
    <property type="match status" value="1"/>
</dbReference>
<dbReference type="Pfam" id="PF02132">
    <property type="entry name" value="RecR_ZnF"/>
    <property type="match status" value="1"/>
</dbReference>
<dbReference type="Pfam" id="PF13662">
    <property type="entry name" value="Toprim_4"/>
    <property type="match status" value="1"/>
</dbReference>
<dbReference type="SMART" id="SM00493">
    <property type="entry name" value="TOPRIM"/>
    <property type="match status" value="1"/>
</dbReference>
<dbReference type="SUPFAM" id="SSF111304">
    <property type="entry name" value="Recombination protein RecR"/>
    <property type="match status" value="1"/>
</dbReference>
<dbReference type="PROSITE" id="PS01300">
    <property type="entry name" value="RECR"/>
    <property type="match status" value="1"/>
</dbReference>
<dbReference type="PROSITE" id="PS50880">
    <property type="entry name" value="TOPRIM"/>
    <property type="match status" value="1"/>
</dbReference>
<organism>
    <name type="scientific">Rhizobium rhizogenes (strain K84 / ATCC BAA-868)</name>
    <name type="common">Agrobacterium radiobacter</name>
    <dbReference type="NCBI Taxonomy" id="311403"/>
    <lineage>
        <taxon>Bacteria</taxon>
        <taxon>Pseudomonadati</taxon>
        <taxon>Pseudomonadota</taxon>
        <taxon>Alphaproteobacteria</taxon>
        <taxon>Hyphomicrobiales</taxon>
        <taxon>Rhizobiaceae</taxon>
        <taxon>Rhizobium/Agrobacterium group</taxon>
        <taxon>Rhizobium</taxon>
    </lineage>
</organism>
<comment type="function">
    <text evidence="1">May play a role in DNA repair. It seems to be involved in an RecBC-independent recombinational process of DNA repair. It may act with RecF and RecO.</text>
</comment>
<comment type="similarity">
    <text evidence="1">Belongs to the RecR family.</text>
</comment>
<name>RECR_RHIR8</name>